<name>MOEA2_MYCTU</name>
<comment type="function">
    <text evidence="1">Catalyzes the insertion of molybdate into adenylated molybdopterin with the concomitant release of AMP.</text>
</comment>
<comment type="catalytic activity">
    <reaction>
        <text>adenylyl-molybdopterin + molybdate = Mo-molybdopterin + AMP + H(+)</text>
        <dbReference type="Rhea" id="RHEA:35047"/>
        <dbReference type="ChEBI" id="CHEBI:15378"/>
        <dbReference type="ChEBI" id="CHEBI:36264"/>
        <dbReference type="ChEBI" id="CHEBI:62727"/>
        <dbReference type="ChEBI" id="CHEBI:71302"/>
        <dbReference type="ChEBI" id="CHEBI:456215"/>
        <dbReference type="EC" id="2.10.1.1"/>
    </reaction>
</comment>
<comment type="cofactor">
    <cofactor evidence="1">
        <name>Mg(2+)</name>
        <dbReference type="ChEBI" id="CHEBI:18420"/>
    </cofactor>
    <text evidence="1">Binds 1 Mg(2+) ion per subunit.</text>
</comment>
<comment type="pathway">
    <text>Cofactor biosynthesis; molybdopterin biosynthesis.</text>
</comment>
<comment type="miscellaneous">
    <text>Was identified as a high-confidence drug target.</text>
</comment>
<comment type="similarity">
    <text evidence="2">Belongs to the MoeA family.</text>
</comment>
<organism>
    <name type="scientific">Mycobacterium tuberculosis (strain ATCC 25618 / H37Rv)</name>
    <dbReference type="NCBI Taxonomy" id="83332"/>
    <lineage>
        <taxon>Bacteria</taxon>
        <taxon>Bacillati</taxon>
        <taxon>Actinomycetota</taxon>
        <taxon>Actinomycetes</taxon>
        <taxon>Mycobacteriales</taxon>
        <taxon>Mycobacteriaceae</taxon>
        <taxon>Mycobacterium</taxon>
        <taxon>Mycobacterium tuberculosis complex</taxon>
    </lineage>
</organism>
<dbReference type="EC" id="2.10.1.1"/>
<dbReference type="EMBL" id="AL123456">
    <property type="protein sequence ID" value="CCP43169.1"/>
    <property type="molecule type" value="Genomic_DNA"/>
</dbReference>
<dbReference type="PIR" id="G70829">
    <property type="entry name" value="G70829"/>
</dbReference>
<dbReference type="SMR" id="P9WJQ5"/>
<dbReference type="FunCoup" id="P9WJQ5">
    <property type="interactions" value="409"/>
</dbReference>
<dbReference type="STRING" id="83332.Rv0438c"/>
<dbReference type="PaxDb" id="83332-Rv0438c"/>
<dbReference type="DNASU" id="886348"/>
<dbReference type="KEGG" id="mtu:Rv0438c"/>
<dbReference type="KEGG" id="mtv:RVBD_0438c"/>
<dbReference type="TubercuList" id="Rv0438c"/>
<dbReference type="eggNOG" id="COG0303">
    <property type="taxonomic scope" value="Bacteria"/>
</dbReference>
<dbReference type="InParanoid" id="P9WJQ5"/>
<dbReference type="OrthoDB" id="9804758at2"/>
<dbReference type="PhylomeDB" id="P9WJQ5"/>
<dbReference type="UniPathway" id="UPA00344"/>
<dbReference type="Proteomes" id="UP000001584">
    <property type="component" value="Chromosome"/>
</dbReference>
<dbReference type="GO" id="GO:0005737">
    <property type="term" value="C:cytoplasm"/>
    <property type="evidence" value="ECO:0000318"/>
    <property type="project" value="GO_Central"/>
</dbReference>
<dbReference type="GO" id="GO:0005829">
    <property type="term" value="C:cytosol"/>
    <property type="evidence" value="ECO:0000318"/>
    <property type="project" value="GO_Central"/>
</dbReference>
<dbReference type="GO" id="GO:0046872">
    <property type="term" value="F:metal ion binding"/>
    <property type="evidence" value="ECO:0007669"/>
    <property type="project" value="UniProtKB-KW"/>
</dbReference>
<dbReference type="GO" id="GO:0061599">
    <property type="term" value="F:molybdopterin molybdotransferase activity"/>
    <property type="evidence" value="ECO:0000318"/>
    <property type="project" value="GO_Central"/>
</dbReference>
<dbReference type="GO" id="GO:0006777">
    <property type="term" value="P:Mo-molybdopterin cofactor biosynthetic process"/>
    <property type="evidence" value="ECO:0000318"/>
    <property type="project" value="GO_Central"/>
</dbReference>
<dbReference type="CDD" id="cd00887">
    <property type="entry name" value="MoeA"/>
    <property type="match status" value="1"/>
</dbReference>
<dbReference type="FunFam" id="2.170.190.11:FF:000001">
    <property type="entry name" value="Molybdopterin molybdenumtransferase"/>
    <property type="match status" value="1"/>
</dbReference>
<dbReference type="FunFam" id="3.40.980.10:FF:000004">
    <property type="entry name" value="Molybdopterin molybdenumtransferase"/>
    <property type="match status" value="1"/>
</dbReference>
<dbReference type="Gene3D" id="3.40.980.10">
    <property type="entry name" value="MoaB/Mog-like domain"/>
    <property type="match status" value="1"/>
</dbReference>
<dbReference type="Gene3D" id="2.40.340.10">
    <property type="entry name" value="MoeA, C-terminal, domain IV"/>
    <property type="match status" value="1"/>
</dbReference>
<dbReference type="Gene3D" id="3.90.105.10">
    <property type="entry name" value="Molybdopterin biosynthesis moea protein, domain 2"/>
    <property type="match status" value="1"/>
</dbReference>
<dbReference type="Gene3D" id="2.170.190.11">
    <property type="entry name" value="Molybdopterin biosynthesis moea protein, domain 3"/>
    <property type="match status" value="1"/>
</dbReference>
<dbReference type="InterPro" id="IPR036425">
    <property type="entry name" value="MoaB/Mog-like_dom_sf"/>
</dbReference>
<dbReference type="InterPro" id="IPR001453">
    <property type="entry name" value="MoaB/Mog_dom"/>
</dbReference>
<dbReference type="InterPro" id="IPR038987">
    <property type="entry name" value="MoeA-like"/>
</dbReference>
<dbReference type="InterPro" id="IPR005111">
    <property type="entry name" value="MoeA_C_domain_IV"/>
</dbReference>
<dbReference type="InterPro" id="IPR036688">
    <property type="entry name" value="MoeA_C_domain_IV_sf"/>
</dbReference>
<dbReference type="InterPro" id="IPR005110">
    <property type="entry name" value="MoeA_linker/N"/>
</dbReference>
<dbReference type="InterPro" id="IPR036135">
    <property type="entry name" value="MoeA_linker/N_sf"/>
</dbReference>
<dbReference type="NCBIfam" id="NF045515">
    <property type="entry name" value="Glp_gephyrin"/>
    <property type="match status" value="1"/>
</dbReference>
<dbReference type="NCBIfam" id="TIGR00177">
    <property type="entry name" value="molyb_syn"/>
    <property type="match status" value="1"/>
</dbReference>
<dbReference type="PANTHER" id="PTHR10192:SF5">
    <property type="entry name" value="GEPHYRIN"/>
    <property type="match status" value="1"/>
</dbReference>
<dbReference type="PANTHER" id="PTHR10192">
    <property type="entry name" value="MOLYBDOPTERIN BIOSYNTHESIS PROTEIN"/>
    <property type="match status" value="1"/>
</dbReference>
<dbReference type="Pfam" id="PF00994">
    <property type="entry name" value="MoCF_biosynth"/>
    <property type="match status" value="1"/>
</dbReference>
<dbReference type="Pfam" id="PF03454">
    <property type="entry name" value="MoeA_C"/>
    <property type="match status" value="1"/>
</dbReference>
<dbReference type="Pfam" id="PF03453">
    <property type="entry name" value="MoeA_N"/>
    <property type="match status" value="1"/>
</dbReference>
<dbReference type="SMART" id="SM00852">
    <property type="entry name" value="MoCF_biosynth"/>
    <property type="match status" value="1"/>
</dbReference>
<dbReference type="SUPFAM" id="SSF63867">
    <property type="entry name" value="MoeA C-terminal domain-like"/>
    <property type="match status" value="1"/>
</dbReference>
<dbReference type="SUPFAM" id="SSF63882">
    <property type="entry name" value="MoeA N-terminal region -like"/>
    <property type="match status" value="1"/>
</dbReference>
<dbReference type="SUPFAM" id="SSF53218">
    <property type="entry name" value="Molybdenum cofactor biosynthesis proteins"/>
    <property type="match status" value="1"/>
</dbReference>
<keyword id="KW-0460">Magnesium</keyword>
<keyword id="KW-0479">Metal-binding</keyword>
<keyword id="KW-0500">Molybdenum</keyword>
<keyword id="KW-0501">Molybdenum cofactor biosynthesis</keyword>
<keyword id="KW-1185">Reference proteome</keyword>
<keyword id="KW-0808">Transferase</keyword>
<accession>P9WJQ5</accession>
<accession>L0T5D3</accession>
<accession>O53725</accession>
<gene>
    <name type="primary">moaE2</name>
    <name type="ordered locus">Rv0438c</name>
    <name type="ORF">MTV037.02c</name>
</gene>
<reference key="1">
    <citation type="journal article" date="1998" name="Nature">
        <title>Deciphering the biology of Mycobacterium tuberculosis from the complete genome sequence.</title>
        <authorList>
            <person name="Cole S.T."/>
            <person name="Brosch R."/>
            <person name="Parkhill J."/>
            <person name="Garnier T."/>
            <person name="Churcher C.M."/>
            <person name="Harris D.E."/>
            <person name="Gordon S.V."/>
            <person name="Eiglmeier K."/>
            <person name="Gas S."/>
            <person name="Barry C.E. III"/>
            <person name="Tekaia F."/>
            <person name="Badcock K."/>
            <person name="Basham D."/>
            <person name="Brown D."/>
            <person name="Chillingworth T."/>
            <person name="Connor R."/>
            <person name="Davies R.M."/>
            <person name="Devlin K."/>
            <person name="Feltwell T."/>
            <person name="Gentles S."/>
            <person name="Hamlin N."/>
            <person name="Holroyd S."/>
            <person name="Hornsby T."/>
            <person name="Jagels K."/>
            <person name="Krogh A."/>
            <person name="McLean J."/>
            <person name="Moule S."/>
            <person name="Murphy L.D."/>
            <person name="Oliver S."/>
            <person name="Osborne J."/>
            <person name="Quail M.A."/>
            <person name="Rajandream M.A."/>
            <person name="Rogers J."/>
            <person name="Rutter S."/>
            <person name="Seeger K."/>
            <person name="Skelton S."/>
            <person name="Squares S."/>
            <person name="Squares R."/>
            <person name="Sulston J.E."/>
            <person name="Taylor K."/>
            <person name="Whitehead S."/>
            <person name="Barrell B.G."/>
        </authorList>
    </citation>
    <scope>NUCLEOTIDE SEQUENCE [LARGE SCALE GENOMIC DNA]</scope>
    <source>
        <strain>ATCC 25618 / H37Rv</strain>
    </source>
</reference>
<reference key="2">
    <citation type="journal article" date="2008" name="BMC Syst. Biol.">
        <title>targetTB: a target identification pipeline for Mycobacterium tuberculosis through an interactome, reactome and genome-scale structural analysis.</title>
        <authorList>
            <person name="Raman K."/>
            <person name="Yeturu K."/>
            <person name="Chandra N."/>
        </authorList>
    </citation>
    <scope>IDENTIFICATION AS A DRUG TARGET [LARGE SCALE ANALYSIS]</scope>
</reference>
<reference key="3">
    <citation type="journal article" date="2011" name="Mol. Cell. Proteomics">
        <title>Proteogenomic analysis of Mycobacterium tuberculosis by high resolution mass spectrometry.</title>
        <authorList>
            <person name="Kelkar D.S."/>
            <person name="Kumar D."/>
            <person name="Kumar P."/>
            <person name="Balakrishnan L."/>
            <person name="Muthusamy B."/>
            <person name="Yadav A.K."/>
            <person name="Shrivastava P."/>
            <person name="Marimuthu A."/>
            <person name="Anand S."/>
            <person name="Sundaram H."/>
            <person name="Kingsbury R."/>
            <person name="Harsha H.C."/>
            <person name="Nair B."/>
            <person name="Prasad T.S."/>
            <person name="Chauhan D.S."/>
            <person name="Katoch K."/>
            <person name="Katoch V.M."/>
            <person name="Kumar P."/>
            <person name="Chaerkady R."/>
            <person name="Ramachandran S."/>
            <person name="Dash D."/>
            <person name="Pandey A."/>
        </authorList>
    </citation>
    <scope>IDENTIFICATION BY MASS SPECTROMETRY [LARGE SCALE ANALYSIS]</scope>
    <source>
        <strain>ATCC 25618 / H37Rv</strain>
    </source>
</reference>
<feature type="chain" id="PRO_0000170992" description="Molybdopterin molybdenumtransferase 2">
    <location>
        <begin position="1"/>
        <end position="405"/>
    </location>
</feature>
<proteinExistence type="evidence at protein level"/>
<evidence type="ECO:0000250" key="1"/>
<evidence type="ECO:0000305" key="2"/>
<protein>
    <recommendedName>
        <fullName>Molybdopterin molybdenumtransferase 2</fullName>
        <shortName>MPT Mo-transferase 2</shortName>
        <ecNumber>2.10.1.1</ecNumber>
    </recommendedName>
</protein>
<sequence>MRSVQEHQRVVAEMMRACRPITVPLTQAQGLVLGGDVVAPLSLPVFDNSAMDGYAVRAEDTSGATPQNPVMLPVAEDIPAGRADMLTLQPVTAHRIMTGAPVPTGATAIVPVEATDGGVDSVAIRQQATPGKHIRRSGEDVAAGTTVLHNGQIVTPAVLGLAAALGLAELPVLPRQRVLVISTGSELASPGTPLQPGQIYESNSIMLAAAVRDAGAAVVATATAGDDVAQFGAILDRYAVDADLIITSGGVSAGAYEVVKDAFGSADYRGGDHGVEFVKVAMQPGMPQGVGRVAGTPIVTLPGNPVSALVSFEVFIRPPLRMAMGLPDPYRPHRSAVLTASLTSPRGKRQFRRAILDHQAGTVISYGPPASHHLRWLASANGLLDIPEDVVEVAAGTQLQVWDLT</sequence>